<proteinExistence type="inferred from homology"/>
<protein>
    <recommendedName>
        <fullName evidence="1">L-threonine 3-dehydrogenase</fullName>
        <shortName evidence="1">TDH</shortName>
        <ecNumber evidence="1">1.1.1.103</ecNumber>
    </recommendedName>
</protein>
<reference key="1">
    <citation type="journal article" date="2000" name="Nature">
        <title>DNA sequence of both chromosomes of the cholera pathogen Vibrio cholerae.</title>
        <authorList>
            <person name="Heidelberg J.F."/>
            <person name="Eisen J.A."/>
            <person name="Nelson W.C."/>
            <person name="Clayton R.A."/>
            <person name="Gwinn M.L."/>
            <person name="Dodson R.J."/>
            <person name="Haft D.H."/>
            <person name="Hickey E.K."/>
            <person name="Peterson J.D."/>
            <person name="Umayam L.A."/>
            <person name="Gill S.R."/>
            <person name="Nelson K.E."/>
            <person name="Read T.D."/>
            <person name="Tettelin H."/>
            <person name="Richardson D.L."/>
            <person name="Ermolaeva M.D."/>
            <person name="Vamathevan J.J."/>
            <person name="Bass S."/>
            <person name="Qin H."/>
            <person name="Dragoi I."/>
            <person name="Sellers P."/>
            <person name="McDonald L.A."/>
            <person name="Utterback T.R."/>
            <person name="Fleischmann R.D."/>
            <person name="Nierman W.C."/>
            <person name="White O."/>
            <person name="Salzberg S.L."/>
            <person name="Smith H.O."/>
            <person name="Colwell R.R."/>
            <person name="Mekalanos J.J."/>
            <person name="Venter J.C."/>
            <person name="Fraser C.M."/>
        </authorList>
    </citation>
    <scope>NUCLEOTIDE SEQUENCE [LARGE SCALE GENOMIC DNA]</scope>
    <source>
        <strain>ATCC 39315 / El Tor Inaba N16961</strain>
    </source>
</reference>
<gene>
    <name evidence="1" type="primary">tdh</name>
    <name type="ordered locus">VC_A0885</name>
</gene>
<comment type="function">
    <text evidence="1">Catalyzes the NAD(+)-dependent oxidation of L-threonine to 2-amino-3-ketobutyrate.</text>
</comment>
<comment type="catalytic activity">
    <reaction evidence="1">
        <text>L-threonine + NAD(+) = (2S)-2-amino-3-oxobutanoate + NADH + H(+)</text>
        <dbReference type="Rhea" id="RHEA:13161"/>
        <dbReference type="ChEBI" id="CHEBI:15378"/>
        <dbReference type="ChEBI" id="CHEBI:57540"/>
        <dbReference type="ChEBI" id="CHEBI:57926"/>
        <dbReference type="ChEBI" id="CHEBI:57945"/>
        <dbReference type="ChEBI" id="CHEBI:78948"/>
        <dbReference type="EC" id="1.1.1.103"/>
    </reaction>
</comment>
<comment type="cofactor">
    <cofactor evidence="1">
        <name>Zn(2+)</name>
        <dbReference type="ChEBI" id="CHEBI:29105"/>
    </cofactor>
    <text evidence="1">Binds 2 Zn(2+) ions per subunit.</text>
</comment>
<comment type="pathway">
    <text evidence="1">Amino-acid degradation; L-threonine degradation via oxydo-reductase pathway; glycine from L-threonine: step 1/2.</text>
</comment>
<comment type="subunit">
    <text evidence="1">Homotetramer.</text>
</comment>
<comment type="subcellular location">
    <subcellularLocation>
        <location evidence="1">Cytoplasm</location>
    </subcellularLocation>
</comment>
<comment type="similarity">
    <text evidence="1">Belongs to the zinc-containing alcohol dehydrogenase family.</text>
</comment>
<dbReference type="EC" id="1.1.1.103" evidence="1"/>
<dbReference type="EMBL" id="AE003853">
    <property type="protein sequence ID" value="AAF96783.1"/>
    <property type="molecule type" value="Genomic_DNA"/>
</dbReference>
<dbReference type="PIR" id="B82405">
    <property type="entry name" value="B82405"/>
</dbReference>
<dbReference type="RefSeq" id="NP_233271.1">
    <property type="nucleotide sequence ID" value="NC_002506.1"/>
</dbReference>
<dbReference type="RefSeq" id="WP_000692622.1">
    <property type="nucleotide sequence ID" value="NZ_LT906615.1"/>
</dbReference>
<dbReference type="SMR" id="Q9KL62"/>
<dbReference type="STRING" id="243277.VC_A0885"/>
<dbReference type="DNASU" id="2612702"/>
<dbReference type="EnsemblBacteria" id="AAF96783">
    <property type="protein sequence ID" value="AAF96783"/>
    <property type="gene ID" value="VC_A0885"/>
</dbReference>
<dbReference type="GeneID" id="69721606"/>
<dbReference type="KEGG" id="vch:VC_A0885"/>
<dbReference type="PATRIC" id="fig|243277.26.peg.3500"/>
<dbReference type="eggNOG" id="COG1063">
    <property type="taxonomic scope" value="Bacteria"/>
</dbReference>
<dbReference type="HOGENOM" id="CLU_026673_11_0_6"/>
<dbReference type="UniPathway" id="UPA00046">
    <property type="reaction ID" value="UER00505"/>
</dbReference>
<dbReference type="Proteomes" id="UP000000584">
    <property type="component" value="Chromosome 2"/>
</dbReference>
<dbReference type="GO" id="GO:0005737">
    <property type="term" value="C:cytoplasm"/>
    <property type="evidence" value="ECO:0007669"/>
    <property type="project" value="UniProtKB-SubCell"/>
</dbReference>
<dbReference type="GO" id="GO:0008743">
    <property type="term" value="F:L-threonine 3-dehydrogenase activity"/>
    <property type="evidence" value="ECO:0007669"/>
    <property type="project" value="UniProtKB-UniRule"/>
</dbReference>
<dbReference type="GO" id="GO:0008270">
    <property type="term" value="F:zinc ion binding"/>
    <property type="evidence" value="ECO:0007669"/>
    <property type="project" value="UniProtKB-UniRule"/>
</dbReference>
<dbReference type="GO" id="GO:0019518">
    <property type="term" value="P:L-threonine catabolic process to glycine"/>
    <property type="evidence" value="ECO:0007669"/>
    <property type="project" value="UniProtKB-UniPathway"/>
</dbReference>
<dbReference type="FunFam" id="3.40.50.720:FF:000059">
    <property type="entry name" value="L-threonine 3-dehydrogenase"/>
    <property type="match status" value="1"/>
</dbReference>
<dbReference type="Gene3D" id="3.90.180.10">
    <property type="entry name" value="Medium-chain alcohol dehydrogenases, catalytic domain"/>
    <property type="match status" value="1"/>
</dbReference>
<dbReference type="Gene3D" id="3.40.50.720">
    <property type="entry name" value="NAD(P)-binding Rossmann-like Domain"/>
    <property type="match status" value="1"/>
</dbReference>
<dbReference type="HAMAP" id="MF_00627">
    <property type="entry name" value="Thr_dehydrog"/>
    <property type="match status" value="1"/>
</dbReference>
<dbReference type="InterPro" id="IPR013149">
    <property type="entry name" value="ADH-like_C"/>
</dbReference>
<dbReference type="InterPro" id="IPR013154">
    <property type="entry name" value="ADH-like_N"/>
</dbReference>
<dbReference type="InterPro" id="IPR002328">
    <property type="entry name" value="ADH_Zn_CS"/>
</dbReference>
<dbReference type="InterPro" id="IPR011032">
    <property type="entry name" value="GroES-like_sf"/>
</dbReference>
<dbReference type="InterPro" id="IPR004627">
    <property type="entry name" value="L-Threonine_3-DHase"/>
</dbReference>
<dbReference type="InterPro" id="IPR036291">
    <property type="entry name" value="NAD(P)-bd_dom_sf"/>
</dbReference>
<dbReference type="InterPro" id="IPR020843">
    <property type="entry name" value="PKS_ER"/>
</dbReference>
<dbReference type="InterPro" id="IPR050129">
    <property type="entry name" value="Zn_alcohol_dh"/>
</dbReference>
<dbReference type="NCBIfam" id="NF003808">
    <property type="entry name" value="PRK05396.1"/>
    <property type="match status" value="1"/>
</dbReference>
<dbReference type="NCBIfam" id="TIGR00692">
    <property type="entry name" value="tdh"/>
    <property type="match status" value="1"/>
</dbReference>
<dbReference type="PANTHER" id="PTHR43401">
    <property type="entry name" value="L-THREONINE 3-DEHYDROGENASE"/>
    <property type="match status" value="1"/>
</dbReference>
<dbReference type="PANTHER" id="PTHR43401:SF2">
    <property type="entry name" value="L-THREONINE 3-DEHYDROGENASE"/>
    <property type="match status" value="1"/>
</dbReference>
<dbReference type="Pfam" id="PF08240">
    <property type="entry name" value="ADH_N"/>
    <property type="match status" value="1"/>
</dbReference>
<dbReference type="Pfam" id="PF00107">
    <property type="entry name" value="ADH_zinc_N"/>
    <property type="match status" value="1"/>
</dbReference>
<dbReference type="SMART" id="SM00829">
    <property type="entry name" value="PKS_ER"/>
    <property type="match status" value="1"/>
</dbReference>
<dbReference type="SUPFAM" id="SSF50129">
    <property type="entry name" value="GroES-like"/>
    <property type="match status" value="1"/>
</dbReference>
<dbReference type="SUPFAM" id="SSF51735">
    <property type="entry name" value="NAD(P)-binding Rossmann-fold domains"/>
    <property type="match status" value="1"/>
</dbReference>
<dbReference type="PROSITE" id="PS00059">
    <property type="entry name" value="ADH_ZINC"/>
    <property type="match status" value="1"/>
</dbReference>
<name>TDH_VIBCH</name>
<organism>
    <name type="scientific">Vibrio cholerae serotype O1 (strain ATCC 39315 / El Tor Inaba N16961)</name>
    <dbReference type="NCBI Taxonomy" id="243277"/>
    <lineage>
        <taxon>Bacteria</taxon>
        <taxon>Pseudomonadati</taxon>
        <taxon>Pseudomonadota</taxon>
        <taxon>Gammaproteobacteria</taxon>
        <taxon>Vibrionales</taxon>
        <taxon>Vibrionaceae</taxon>
        <taxon>Vibrio</taxon>
    </lineage>
</organism>
<feature type="chain" id="PRO_0000160865" description="L-threonine 3-dehydrogenase">
    <location>
        <begin position="1"/>
        <end position="343"/>
    </location>
</feature>
<feature type="active site" description="Charge relay system" evidence="1">
    <location>
        <position position="42"/>
    </location>
</feature>
<feature type="active site" description="Charge relay system" evidence="1">
    <location>
        <position position="45"/>
    </location>
</feature>
<feature type="binding site" evidence="1">
    <location>
        <position position="40"/>
    </location>
    <ligand>
        <name>Zn(2+)</name>
        <dbReference type="ChEBI" id="CHEBI:29105"/>
        <label>1</label>
        <note>catalytic</note>
    </ligand>
</feature>
<feature type="binding site" evidence="1">
    <location>
        <position position="65"/>
    </location>
    <ligand>
        <name>Zn(2+)</name>
        <dbReference type="ChEBI" id="CHEBI:29105"/>
        <label>1</label>
        <note>catalytic</note>
    </ligand>
</feature>
<feature type="binding site" evidence="1">
    <location>
        <position position="66"/>
    </location>
    <ligand>
        <name>Zn(2+)</name>
        <dbReference type="ChEBI" id="CHEBI:29105"/>
        <label>1</label>
        <note>catalytic</note>
    </ligand>
</feature>
<feature type="binding site" evidence="1">
    <location>
        <position position="95"/>
    </location>
    <ligand>
        <name>Zn(2+)</name>
        <dbReference type="ChEBI" id="CHEBI:29105"/>
        <label>2</label>
    </ligand>
</feature>
<feature type="binding site" evidence="1">
    <location>
        <position position="98"/>
    </location>
    <ligand>
        <name>Zn(2+)</name>
        <dbReference type="ChEBI" id="CHEBI:29105"/>
        <label>2</label>
    </ligand>
</feature>
<feature type="binding site" evidence="1">
    <location>
        <position position="101"/>
    </location>
    <ligand>
        <name>Zn(2+)</name>
        <dbReference type="ChEBI" id="CHEBI:29105"/>
        <label>2</label>
    </ligand>
</feature>
<feature type="binding site" evidence="1">
    <location>
        <position position="109"/>
    </location>
    <ligand>
        <name>Zn(2+)</name>
        <dbReference type="ChEBI" id="CHEBI:29105"/>
        <label>2</label>
    </ligand>
</feature>
<feature type="binding site" evidence="1">
    <location>
        <position position="177"/>
    </location>
    <ligand>
        <name>NAD(+)</name>
        <dbReference type="ChEBI" id="CHEBI:57540"/>
    </ligand>
</feature>
<feature type="binding site" evidence="1">
    <location>
        <position position="197"/>
    </location>
    <ligand>
        <name>NAD(+)</name>
        <dbReference type="ChEBI" id="CHEBI:57540"/>
    </ligand>
</feature>
<feature type="binding site" evidence="1">
    <location>
        <position position="202"/>
    </location>
    <ligand>
        <name>NAD(+)</name>
        <dbReference type="ChEBI" id="CHEBI:57540"/>
    </ligand>
</feature>
<feature type="binding site" evidence="1">
    <location>
        <begin position="264"/>
        <end position="266"/>
    </location>
    <ligand>
        <name>NAD(+)</name>
        <dbReference type="ChEBI" id="CHEBI:57540"/>
    </ligand>
</feature>
<feature type="binding site" evidence="1">
    <location>
        <begin position="288"/>
        <end position="289"/>
    </location>
    <ligand>
        <name>NAD(+)</name>
        <dbReference type="ChEBI" id="CHEBI:57540"/>
    </ligand>
</feature>
<feature type="site" description="Important for catalytic activity for the proton relay mechanism but does not participate directly in the coordination of zinc atom" evidence="1">
    <location>
        <position position="150"/>
    </location>
</feature>
<evidence type="ECO:0000255" key="1">
    <source>
        <dbReference type="HAMAP-Rule" id="MF_00627"/>
    </source>
</evidence>
<keyword id="KW-0963">Cytoplasm</keyword>
<keyword id="KW-0479">Metal-binding</keyword>
<keyword id="KW-0520">NAD</keyword>
<keyword id="KW-0560">Oxidoreductase</keyword>
<keyword id="KW-1185">Reference proteome</keyword>
<keyword id="KW-0862">Zinc</keyword>
<accession>Q9KL62</accession>
<sequence length="343" mass="37541">MKIKALSKLKPEQGIWMNEVDMPELGHNDLLIKIKKTAICGTDVHIYNWDEWSQKTIPVPMVVGHEYVGEVVGIGQEVRGFQIGDRVSGEGHITCGHCRNCRGGRTHLCRNTIGVGVNRTGCFSEYLVIPAFNAFKIPDGISDDLASIFDPFGNAVHTALSFDLVGEDVLITGAGPIGIMAAAVAKHVGARHVVITDVNEYRLDLARKMGVTRAVNVAEQNLEDVMKELGMTEGFDVGLEMSGVPSAFSAMLKTMNHGGRIALLGIPPSSMAIDWNQVIFKGLVIKGIYGREMFETWYKMASLIQSGLDISPIITHHFKVDDFQKGFDIMRSGASGKVILDWQ</sequence>